<sequence length="555" mass="61722">MDEQVIFTTNTSGTIASVHSFEQINLRQCSTQSRNSCVQVGNKYLFIAQAQKALINVYNLSGSFKRESVEQRLPLPEILKCLEVVENNGVQYDRIQGVNHNLPDFNLPYLLLGSTESGKLYIWELNSGILLNVKPMAHYQSITKIKPILNGKYIITSGNDSRVIIWQTVDLVSASNDDPKPLCILHDHTLPVTDFQVSSSQGKFLSCTDTKLFTVSQDATIRCYDLSLIGSKKKQKANENDVSIGKTPVLLATFTTPYSIKSIVLDPADRACYIGTAEGCFSLNLFYKLKGNAIVNLLQSAGVNTVQKGRVFSLVQRNSLTGGENEDLDALYAMGQLVCENVLNSNVSCLEISMDGTLLLIGDTEGKVSIAEIYSKQIIRTIQTLTTSQDSVGEVTNLLTNPYRLERGNLLLEGESKGKQASNNNGHNFMKIPNLQRVIFDGKNKGHLHDIWYQIGEPEAETDPNLALPLNDFNAYLEQVKTQESIFSHIGKVSSNVKVIDNKIDATSSLDSNAAKDEEITELKTNIEALTHAYKELRDMHEKLYEEHQQMLDKQ</sequence>
<gene>
    <name type="primary">IPI3</name>
    <name type="ORF">SCY_4615</name>
</gene>
<accession>A6ZRQ4</accession>
<keyword id="KW-0539">Nucleus</keyword>
<keyword id="KW-0597">Phosphoprotein</keyword>
<keyword id="KW-0677">Repeat</keyword>
<keyword id="KW-0690">Ribosome biogenesis</keyword>
<keyword id="KW-0698">rRNA processing</keyword>
<keyword id="KW-0853">WD repeat</keyword>
<reference key="1">
    <citation type="journal article" date="2007" name="Proc. Natl. Acad. Sci. U.S.A.">
        <title>Genome sequencing and comparative analysis of Saccharomyces cerevisiae strain YJM789.</title>
        <authorList>
            <person name="Wei W."/>
            <person name="McCusker J.H."/>
            <person name="Hyman R.W."/>
            <person name="Jones T."/>
            <person name="Ning Y."/>
            <person name="Cao Z."/>
            <person name="Gu Z."/>
            <person name="Bruno D."/>
            <person name="Miranda M."/>
            <person name="Nguyen M."/>
            <person name="Wilhelmy J."/>
            <person name="Komp C."/>
            <person name="Tamse R."/>
            <person name="Wang X."/>
            <person name="Jia P."/>
            <person name="Luedi P."/>
            <person name="Oefner P.J."/>
            <person name="David L."/>
            <person name="Dietrich F.S."/>
            <person name="Li Y."/>
            <person name="Davis R.W."/>
            <person name="Steinmetz L.M."/>
        </authorList>
    </citation>
    <scope>NUCLEOTIDE SEQUENCE [LARGE SCALE GENOMIC DNA]</scope>
    <source>
        <strain>YJM789</strain>
    </source>
</reference>
<protein>
    <recommendedName>
        <fullName>Pre-rRNA-processing protein IPI3</fullName>
    </recommendedName>
    <alternativeName>
        <fullName>Involved in processing IST2 protein 3</fullName>
    </alternativeName>
</protein>
<organism>
    <name type="scientific">Saccharomyces cerevisiae (strain YJM789)</name>
    <name type="common">Baker's yeast</name>
    <dbReference type="NCBI Taxonomy" id="307796"/>
    <lineage>
        <taxon>Eukaryota</taxon>
        <taxon>Fungi</taxon>
        <taxon>Dikarya</taxon>
        <taxon>Ascomycota</taxon>
        <taxon>Saccharomycotina</taxon>
        <taxon>Saccharomycetes</taxon>
        <taxon>Saccharomycetales</taxon>
        <taxon>Saccharomycetaceae</taxon>
        <taxon>Saccharomyces</taxon>
    </lineage>
</organism>
<comment type="function">
    <text evidence="1">Component of the RIX1 complex required for processing of ITS2 sequences from 35S pre-rRNA.</text>
</comment>
<comment type="subunit">
    <text evidence="1">Component of the RIX1 complex, composed of IPI1, RIX1/IPI2 and IPI3 in a 1:2:2 stoichiometry. The complex interacts (via RIX1) with MDN1 (via its hexameric AAA ATPase ring) and the pre-60S ribosome particles.</text>
</comment>
<comment type="subcellular location">
    <subcellularLocation>
        <location evidence="1">Nucleus</location>
    </subcellularLocation>
</comment>
<comment type="similarity">
    <text evidence="2">Belongs to the WD repeat IPI3/WDR18 family.</text>
</comment>
<evidence type="ECO:0000250" key="1">
    <source>
        <dbReference type="UniProtKB" id="P53877"/>
    </source>
</evidence>
<evidence type="ECO:0000305" key="2"/>
<name>IPI3_YEAS7</name>
<dbReference type="EMBL" id="AAFW02000067">
    <property type="protein sequence ID" value="EDN62636.1"/>
    <property type="molecule type" value="Genomic_DNA"/>
</dbReference>
<dbReference type="SMR" id="A6ZRQ4"/>
<dbReference type="HOGENOM" id="CLU_029749_4_0_1"/>
<dbReference type="Proteomes" id="UP000007060">
    <property type="component" value="Unassembled WGS sequence"/>
</dbReference>
<dbReference type="GO" id="GO:0005656">
    <property type="term" value="C:nuclear pre-replicative complex"/>
    <property type="evidence" value="ECO:0007669"/>
    <property type="project" value="TreeGrafter"/>
</dbReference>
<dbReference type="GO" id="GO:0120330">
    <property type="term" value="C:rixosome complex"/>
    <property type="evidence" value="ECO:0007669"/>
    <property type="project" value="TreeGrafter"/>
</dbReference>
<dbReference type="GO" id="GO:0006261">
    <property type="term" value="P:DNA-templated DNA replication"/>
    <property type="evidence" value="ECO:0007669"/>
    <property type="project" value="TreeGrafter"/>
</dbReference>
<dbReference type="GO" id="GO:0006364">
    <property type="term" value="P:rRNA processing"/>
    <property type="evidence" value="ECO:0007669"/>
    <property type="project" value="UniProtKB-KW"/>
</dbReference>
<dbReference type="FunFam" id="2.130.10.10:FF:001736">
    <property type="entry name" value="Pre-rRNA-processing protein IPI3"/>
    <property type="match status" value="1"/>
</dbReference>
<dbReference type="Gene3D" id="2.130.10.10">
    <property type="entry name" value="YVTN repeat-like/Quinoprotein amine dehydrogenase"/>
    <property type="match status" value="1"/>
</dbReference>
<dbReference type="InterPro" id="IPR015943">
    <property type="entry name" value="WD40/YVTN_repeat-like_dom_sf"/>
</dbReference>
<dbReference type="InterPro" id="IPR036322">
    <property type="entry name" value="WD40_repeat_dom_sf"/>
</dbReference>
<dbReference type="InterPro" id="IPR001680">
    <property type="entry name" value="WD40_rpt"/>
</dbReference>
<dbReference type="InterPro" id="IPR045227">
    <property type="entry name" value="WDR18/Ipi3/RID3"/>
</dbReference>
<dbReference type="PANTHER" id="PTHR18763:SF0">
    <property type="entry name" value="WD REPEAT-CONTAINING PROTEIN 18"/>
    <property type="match status" value="1"/>
</dbReference>
<dbReference type="PANTHER" id="PTHR18763">
    <property type="entry name" value="WD-REPEAT PROTEIN 18"/>
    <property type="match status" value="1"/>
</dbReference>
<dbReference type="Pfam" id="PF00400">
    <property type="entry name" value="WD40"/>
    <property type="match status" value="2"/>
</dbReference>
<dbReference type="SMART" id="SM00320">
    <property type="entry name" value="WD40"/>
    <property type="match status" value="3"/>
</dbReference>
<dbReference type="SUPFAM" id="SSF50978">
    <property type="entry name" value="WD40 repeat-like"/>
    <property type="match status" value="1"/>
</dbReference>
<dbReference type="PROSITE" id="PS50082">
    <property type="entry name" value="WD_REPEATS_2"/>
    <property type="match status" value="1"/>
</dbReference>
<dbReference type="PROSITE" id="PS50294">
    <property type="entry name" value="WD_REPEATS_REGION"/>
    <property type="match status" value="1"/>
</dbReference>
<feature type="chain" id="PRO_0000308746" description="Pre-rRNA-processing protein IPI3">
    <location>
        <begin position="1"/>
        <end position="555"/>
    </location>
</feature>
<feature type="repeat" description="WD 1">
    <location>
        <begin position="90"/>
        <end position="133"/>
    </location>
</feature>
<feature type="repeat" description="WD 2">
    <location>
        <begin position="137"/>
        <end position="176"/>
    </location>
</feature>
<feature type="repeat" description="WD 3">
    <location>
        <begin position="187"/>
        <end position="234"/>
    </location>
</feature>
<feature type="repeat" description="WD 4">
    <location>
        <begin position="342"/>
        <end position="383"/>
    </location>
</feature>
<feature type="modified residue" description="Phosphoserine" evidence="1">
    <location>
        <position position="388"/>
    </location>
</feature>
<proteinExistence type="inferred from homology"/>